<accession>B0R870</accession>
<keyword id="KW-0342">GTP-binding</keyword>
<keyword id="KW-0436">Ligase</keyword>
<keyword id="KW-0460">Magnesium</keyword>
<keyword id="KW-0464">Manganese</keyword>
<keyword id="KW-0479">Metal-binding</keyword>
<keyword id="KW-0547">Nucleotide-binding</keyword>
<keyword id="KW-0630">Potassium</keyword>
<sequence>MHAFAVDGLPEIDAGDDLAALVAERADLTDGDVVCVASTVVSKAEGRTAALAEFTPGPRAEEIAARLADVTGEQKDPRFAQAVIEEATEVIMDAPFLLTETTCGHVGVNAGIDRSNTGGAELLLLPKRPAESAARIQAGLAADVGVVVTDTSGRPFRHGQRGVALGWAGLPAARDWRGETDRDGHELAVTVEAVVDELAATANLVSGEGDDGTPVVVVREFEFGDHDGSEQLFRAVDGDFVRQALRGWTFDGA</sequence>
<protein>
    <recommendedName>
        <fullName evidence="1">Coenzyme F420:L-glutamate ligase</fullName>
        <ecNumber evidence="1">6.3.2.31</ecNumber>
        <ecNumber evidence="1">6.3.2.34</ecNumber>
    </recommendedName>
    <alternativeName>
        <fullName evidence="1">Coenzyme F420-0:L-glutamate ligase</fullName>
    </alternativeName>
    <alternativeName>
        <fullName evidence="1">Coenzyme F420-1:gamma-L-glutamate ligase</fullName>
    </alternativeName>
</protein>
<feature type="chain" id="PRO_1000139983" description="Coenzyme F420:L-glutamate ligase">
    <location>
        <begin position="1"/>
        <end position="253"/>
    </location>
</feature>
<feature type="binding site" evidence="1">
    <location>
        <begin position="9"/>
        <end position="12"/>
    </location>
    <ligand>
        <name>GTP</name>
        <dbReference type="ChEBI" id="CHEBI:37565"/>
    </ligand>
</feature>
<feature type="binding site" evidence="1">
    <location>
        <begin position="38"/>
        <end position="39"/>
    </location>
    <ligand>
        <name>GTP</name>
        <dbReference type="ChEBI" id="CHEBI:37565"/>
    </ligand>
</feature>
<feature type="binding site" evidence="1">
    <location>
        <position position="43"/>
    </location>
    <ligand>
        <name>GTP</name>
        <dbReference type="ChEBI" id="CHEBI:37565"/>
    </ligand>
</feature>
<feature type="binding site" evidence="1">
    <location>
        <position position="113"/>
    </location>
    <ligand>
        <name>a divalent metal cation</name>
        <dbReference type="ChEBI" id="CHEBI:60240"/>
        <label>1</label>
    </ligand>
</feature>
<feature type="binding site" evidence="1">
    <location>
        <position position="116"/>
    </location>
    <ligand>
        <name>GTP</name>
        <dbReference type="ChEBI" id="CHEBI:37565"/>
    </ligand>
</feature>
<feature type="binding site" evidence="1">
    <location>
        <position position="150"/>
    </location>
    <ligand>
        <name>a divalent metal cation</name>
        <dbReference type="ChEBI" id="CHEBI:60240"/>
        <label>1</label>
    </ligand>
</feature>
<feature type="binding site" evidence="1">
    <location>
        <position position="151"/>
    </location>
    <ligand>
        <name>a divalent metal cation</name>
        <dbReference type="ChEBI" id="CHEBI:60240"/>
        <label>2</label>
    </ligand>
</feature>
<feature type="binding site" evidence="1">
    <location>
        <begin position="206"/>
        <end position="213"/>
    </location>
    <ligand>
        <name>GTP</name>
        <dbReference type="ChEBI" id="CHEBI:37565"/>
    </ligand>
</feature>
<feature type="binding site" evidence="1">
    <location>
        <position position="208"/>
    </location>
    <ligand>
        <name>a divalent metal cation</name>
        <dbReference type="ChEBI" id="CHEBI:60240"/>
        <label>2</label>
    </ligand>
</feature>
<proteinExistence type="inferred from homology"/>
<organism>
    <name type="scientific">Halobacterium salinarum (strain ATCC 29341 / DSM 671 / R1)</name>
    <dbReference type="NCBI Taxonomy" id="478009"/>
    <lineage>
        <taxon>Archaea</taxon>
        <taxon>Methanobacteriati</taxon>
        <taxon>Methanobacteriota</taxon>
        <taxon>Stenosarchaea group</taxon>
        <taxon>Halobacteria</taxon>
        <taxon>Halobacteriales</taxon>
        <taxon>Halobacteriaceae</taxon>
        <taxon>Halobacterium</taxon>
        <taxon>Halobacterium salinarum NRC-34001</taxon>
    </lineage>
</organism>
<comment type="function">
    <text evidence="1">Catalyzes the GTP-dependent successive addition of two or more gamma-linked L-glutamates to the L-lactyl phosphodiester of 7,8-didemethyl-8-hydroxy-5-deazariboflavin (F420-0) to form coenzyme F420-0-glutamyl-glutamate (F420-2) or polyglutamated F420 derivatives.</text>
</comment>
<comment type="catalytic activity">
    <reaction evidence="1">
        <text>oxidized coenzyme F420-0 + GTP + L-glutamate = oxidized coenzyme F420-1 + GDP + phosphate + H(+)</text>
        <dbReference type="Rhea" id="RHEA:30555"/>
        <dbReference type="ChEBI" id="CHEBI:15378"/>
        <dbReference type="ChEBI" id="CHEBI:29985"/>
        <dbReference type="ChEBI" id="CHEBI:37565"/>
        <dbReference type="ChEBI" id="CHEBI:43474"/>
        <dbReference type="ChEBI" id="CHEBI:58189"/>
        <dbReference type="ChEBI" id="CHEBI:59907"/>
        <dbReference type="ChEBI" id="CHEBI:59920"/>
        <dbReference type="EC" id="6.3.2.31"/>
    </reaction>
</comment>
<comment type="catalytic activity">
    <reaction evidence="1">
        <text>oxidized coenzyme F420-1 + GTP + L-glutamate = oxidized coenzyme F420-2 + GDP + phosphate + H(+)</text>
        <dbReference type="Rhea" id="RHEA:30523"/>
        <dbReference type="ChEBI" id="CHEBI:15378"/>
        <dbReference type="ChEBI" id="CHEBI:29985"/>
        <dbReference type="ChEBI" id="CHEBI:37565"/>
        <dbReference type="ChEBI" id="CHEBI:43474"/>
        <dbReference type="ChEBI" id="CHEBI:57922"/>
        <dbReference type="ChEBI" id="CHEBI:58189"/>
        <dbReference type="ChEBI" id="CHEBI:59920"/>
        <dbReference type="EC" id="6.3.2.34"/>
    </reaction>
</comment>
<comment type="cofactor">
    <cofactor evidence="1">
        <name>Mg(2+)</name>
        <dbReference type="ChEBI" id="CHEBI:18420"/>
    </cofactor>
    <cofactor evidence="1">
        <name>Mn(2+)</name>
        <dbReference type="ChEBI" id="CHEBI:29035"/>
    </cofactor>
    <text evidence="1">Binds 2 divalent metal cations per subunit. The ions could be magnesium and/or manganese.</text>
</comment>
<comment type="cofactor">
    <cofactor evidence="1">
        <name>K(+)</name>
        <dbReference type="ChEBI" id="CHEBI:29103"/>
    </cofactor>
    <text evidence="1">Monovalent cation. The ion could be potassium.</text>
</comment>
<comment type="pathway">
    <text evidence="1">Cofactor biosynthesis; coenzyme F420 biosynthesis.</text>
</comment>
<comment type="subunit">
    <text evidence="1">Homodimer.</text>
</comment>
<comment type="similarity">
    <text evidence="1">Belongs to the CofE family.</text>
</comment>
<name>COFE_HALS3</name>
<gene>
    <name evidence="1" type="primary">cofE</name>
    <name type="ordered locus">OE_4628R</name>
</gene>
<reference key="1">
    <citation type="journal article" date="2008" name="Genomics">
        <title>Evolution in the laboratory: the genome of Halobacterium salinarum strain R1 compared to that of strain NRC-1.</title>
        <authorList>
            <person name="Pfeiffer F."/>
            <person name="Schuster S.C."/>
            <person name="Broicher A."/>
            <person name="Falb M."/>
            <person name="Palm P."/>
            <person name="Rodewald K."/>
            <person name="Ruepp A."/>
            <person name="Soppa J."/>
            <person name="Tittor J."/>
            <person name="Oesterhelt D."/>
        </authorList>
    </citation>
    <scope>NUCLEOTIDE SEQUENCE [LARGE SCALE GENOMIC DNA]</scope>
    <source>
        <strain>ATCC 29341 / DSM 671 / R1</strain>
    </source>
</reference>
<evidence type="ECO:0000255" key="1">
    <source>
        <dbReference type="HAMAP-Rule" id="MF_01258"/>
    </source>
</evidence>
<dbReference type="EC" id="6.3.2.31" evidence="1"/>
<dbReference type="EC" id="6.3.2.34" evidence="1"/>
<dbReference type="EMBL" id="AM774415">
    <property type="protein sequence ID" value="CAP14939.1"/>
    <property type="molecule type" value="Genomic_DNA"/>
</dbReference>
<dbReference type="RefSeq" id="WP_010903932.1">
    <property type="nucleotide sequence ID" value="NC_010364.1"/>
</dbReference>
<dbReference type="SMR" id="B0R870"/>
<dbReference type="EnsemblBacteria" id="CAP14939">
    <property type="protein sequence ID" value="CAP14939"/>
    <property type="gene ID" value="OE_4628R"/>
</dbReference>
<dbReference type="KEGG" id="hsl:OE_4628R"/>
<dbReference type="HOGENOM" id="CLU_051152_1_1_2"/>
<dbReference type="PhylomeDB" id="B0R870"/>
<dbReference type="UniPathway" id="UPA00071"/>
<dbReference type="Proteomes" id="UP000001321">
    <property type="component" value="Chromosome"/>
</dbReference>
<dbReference type="GO" id="GO:0052618">
    <property type="term" value="F:coenzyme F420-0:L-glutamate ligase activity"/>
    <property type="evidence" value="ECO:0007669"/>
    <property type="project" value="UniProtKB-UniRule"/>
</dbReference>
<dbReference type="GO" id="GO:0052619">
    <property type="term" value="F:coenzyme F420-1:gamma-L-glutamate ligase activity"/>
    <property type="evidence" value="ECO:0007669"/>
    <property type="project" value="UniProtKB-UniRule"/>
</dbReference>
<dbReference type="GO" id="GO:0005525">
    <property type="term" value="F:GTP binding"/>
    <property type="evidence" value="ECO:0007669"/>
    <property type="project" value="UniProtKB-KW"/>
</dbReference>
<dbReference type="GO" id="GO:0046872">
    <property type="term" value="F:metal ion binding"/>
    <property type="evidence" value="ECO:0007669"/>
    <property type="project" value="UniProtKB-KW"/>
</dbReference>
<dbReference type="GO" id="GO:0052645">
    <property type="term" value="P:F420-0 metabolic process"/>
    <property type="evidence" value="ECO:0007669"/>
    <property type="project" value="UniProtKB-UniRule"/>
</dbReference>
<dbReference type="Gene3D" id="3.30.1330.100">
    <property type="entry name" value="CofE-like"/>
    <property type="match status" value="1"/>
</dbReference>
<dbReference type="Gene3D" id="3.90.1660.10">
    <property type="entry name" value="CofE-like domain"/>
    <property type="match status" value="1"/>
</dbReference>
<dbReference type="HAMAP" id="MF_01258">
    <property type="entry name" value="F420_ligase_CofE"/>
    <property type="match status" value="1"/>
</dbReference>
<dbReference type="InterPro" id="IPR008225">
    <property type="entry name" value="F420-0_g-glutamyl_ligase"/>
</dbReference>
<dbReference type="InterPro" id="IPR002847">
    <property type="entry name" value="F420-0_gamma-glut_ligase-dom"/>
</dbReference>
<dbReference type="InterPro" id="IPR023659">
    <property type="entry name" value="F420_ligase_CofE_arc"/>
</dbReference>
<dbReference type="NCBIfam" id="TIGR01916">
    <property type="entry name" value="F420_cofE"/>
    <property type="match status" value="1"/>
</dbReference>
<dbReference type="NCBIfam" id="NF009809">
    <property type="entry name" value="PRK13293.1"/>
    <property type="match status" value="1"/>
</dbReference>
<dbReference type="PANTHER" id="PTHR47917">
    <property type="match status" value="1"/>
</dbReference>
<dbReference type="PANTHER" id="PTHR47917:SF1">
    <property type="entry name" value="COENZYME F420:L-GLUTAMATE LIGASE"/>
    <property type="match status" value="1"/>
</dbReference>
<dbReference type="Pfam" id="PF01996">
    <property type="entry name" value="F420_ligase"/>
    <property type="match status" value="1"/>
</dbReference>
<dbReference type="SUPFAM" id="SSF144010">
    <property type="entry name" value="CofE-like"/>
    <property type="match status" value="1"/>
</dbReference>